<name>SYA_SACD2</name>
<organism>
    <name type="scientific">Saccharophagus degradans (strain 2-40 / ATCC 43961 / DSM 17024)</name>
    <dbReference type="NCBI Taxonomy" id="203122"/>
    <lineage>
        <taxon>Bacteria</taxon>
        <taxon>Pseudomonadati</taxon>
        <taxon>Pseudomonadota</taxon>
        <taxon>Gammaproteobacteria</taxon>
        <taxon>Cellvibrionales</taxon>
        <taxon>Cellvibrionaceae</taxon>
        <taxon>Saccharophagus</taxon>
    </lineage>
</organism>
<gene>
    <name evidence="1" type="primary">alaS</name>
    <name type="ordered locus">Sde_1299</name>
</gene>
<reference key="1">
    <citation type="journal article" date="2008" name="PLoS Genet.">
        <title>Complete genome sequence of the complex carbohydrate-degrading marine bacterium, Saccharophagus degradans strain 2-40 T.</title>
        <authorList>
            <person name="Weiner R.M."/>
            <person name="Taylor L.E. II"/>
            <person name="Henrissat B."/>
            <person name="Hauser L."/>
            <person name="Land M."/>
            <person name="Coutinho P.M."/>
            <person name="Rancurel C."/>
            <person name="Saunders E.H."/>
            <person name="Longmire A.G."/>
            <person name="Zhang H."/>
            <person name="Bayer E.A."/>
            <person name="Gilbert H.J."/>
            <person name="Larimer F."/>
            <person name="Zhulin I.B."/>
            <person name="Ekborg N.A."/>
            <person name="Lamed R."/>
            <person name="Richardson P.M."/>
            <person name="Borovok I."/>
            <person name="Hutcheson S."/>
        </authorList>
    </citation>
    <scope>NUCLEOTIDE SEQUENCE [LARGE SCALE GENOMIC DNA]</scope>
    <source>
        <strain>2-40 / ATCC 43961 / DSM 17024</strain>
    </source>
</reference>
<proteinExistence type="inferred from homology"/>
<protein>
    <recommendedName>
        <fullName evidence="1">Alanine--tRNA ligase</fullName>
        <ecNumber evidence="1">6.1.1.7</ecNumber>
    </recommendedName>
    <alternativeName>
        <fullName evidence="1">Alanyl-tRNA synthetase</fullName>
        <shortName evidence="1">AlaRS</shortName>
    </alternativeName>
</protein>
<keyword id="KW-0030">Aminoacyl-tRNA synthetase</keyword>
<keyword id="KW-0067">ATP-binding</keyword>
<keyword id="KW-0963">Cytoplasm</keyword>
<keyword id="KW-0436">Ligase</keyword>
<keyword id="KW-0479">Metal-binding</keyword>
<keyword id="KW-0547">Nucleotide-binding</keyword>
<keyword id="KW-0648">Protein biosynthesis</keyword>
<keyword id="KW-1185">Reference proteome</keyword>
<keyword id="KW-0694">RNA-binding</keyword>
<keyword id="KW-0820">tRNA-binding</keyword>
<keyword id="KW-0862">Zinc</keyword>
<evidence type="ECO:0000255" key="1">
    <source>
        <dbReference type="HAMAP-Rule" id="MF_00036"/>
    </source>
</evidence>
<feature type="chain" id="PRO_0000347772" description="Alanine--tRNA ligase">
    <location>
        <begin position="1"/>
        <end position="875"/>
    </location>
</feature>
<feature type="binding site" evidence="1">
    <location>
        <position position="562"/>
    </location>
    <ligand>
        <name>Zn(2+)</name>
        <dbReference type="ChEBI" id="CHEBI:29105"/>
    </ligand>
</feature>
<feature type="binding site" evidence="1">
    <location>
        <position position="566"/>
    </location>
    <ligand>
        <name>Zn(2+)</name>
        <dbReference type="ChEBI" id="CHEBI:29105"/>
    </ligand>
</feature>
<feature type="binding site" evidence="1">
    <location>
        <position position="665"/>
    </location>
    <ligand>
        <name>Zn(2+)</name>
        <dbReference type="ChEBI" id="CHEBI:29105"/>
    </ligand>
</feature>
<feature type="binding site" evidence="1">
    <location>
        <position position="669"/>
    </location>
    <ligand>
        <name>Zn(2+)</name>
        <dbReference type="ChEBI" id="CHEBI:29105"/>
    </ligand>
</feature>
<sequence>MKSAEIREAFLQYFESKGHSRVASSSLVPGNDPTLLFTNAGMVQFKDVFLGQDNRSYSRATSSQRCVRAGGKHNDLENVGYTARHHTFFEMLGNFSFGDYFKKDAINYAWEFLTSKEWLAIPTEKLCVTVYADDDEAYGIWANDVGVPEDRIIRIGDNKGGRYNSDNFWAMGDTGPCGPCTEIFYDHGEHIWGGRPGTPEEDGDRFIEIWNVVFMQFNRSVDGEMAPLPKPSVDTGMGLERIAAVMQHVHSNYEIDLFQALLEAAAQATQAEDKDAKSLRVIADHIRSCAFLVSDGVLPSNEGRGYVLRRIIRRAVRHGNKLGQTKPFFHTLVAALVEQMGEAYPELVRDQASIEKVLAAEEDQFAKTLEKGMVVLESALSELKGTIIPGEVIFTLYDTYGFPVDLTNDIARERELTLDMDGYDALMEQQKKRARESGSFKVDYSATATIEGHTNFVGYSELTGDASVTAILVDGENVDTLTEGQSGVIVLDTTPFYGESGGQAGDTGYIVFDGAKFEVQDCQKSGANHLHVGQLLAGAVKVGDKAQPVVDSAVRQATALNHSATHLLHAALRKVLGEHVTQKGSLVDSERLRFDFSHFEAVKPEELKQIESMVNEQIRLNSPVETELCDMEAAQQKGAMALFGEKYGDEVRVLSMGGAFSVELCGGTHVSRTGDIGLIRITSESGIASGVRRIEAVTGEKALSVIDASADTLNAAAKLLKASPENLLDKVEQLIAQNRQLEKSLAAAKSKLASSSADEWLSEATDIAGVKVLAKAVEGVDAKSLRDMMDKLKNKLGTSAVILASVNDDKISLVAGVSQDATSKIKAGDMVKHVAGLIGGKGGGRPDMAQGGGTDVEALPAAIGSVLDWAKGVIG</sequence>
<comment type="function">
    <text evidence="1">Catalyzes the attachment of alanine to tRNA(Ala) in a two-step reaction: alanine is first activated by ATP to form Ala-AMP and then transferred to the acceptor end of tRNA(Ala). Also edits incorrectly charged Ser-tRNA(Ala) and Gly-tRNA(Ala) via its editing domain.</text>
</comment>
<comment type="catalytic activity">
    <reaction evidence="1">
        <text>tRNA(Ala) + L-alanine + ATP = L-alanyl-tRNA(Ala) + AMP + diphosphate</text>
        <dbReference type="Rhea" id="RHEA:12540"/>
        <dbReference type="Rhea" id="RHEA-COMP:9657"/>
        <dbReference type="Rhea" id="RHEA-COMP:9923"/>
        <dbReference type="ChEBI" id="CHEBI:30616"/>
        <dbReference type="ChEBI" id="CHEBI:33019"/>
        <dbReference type="ChEBI" id="CHEBI:57972"/>
        <dbReference type="ChEBI" id="CHEBI:78442"/>
        <dbReference type="ChEBI" id="CHEBI:78497"/>
        <dbReference type="ChEBI" id="CHEBI:456215"/>
        <dbReference type="EC" id="6.1.1.7"/>
    </reaction>
</comment>
<comment type="cofactor">
    <cofactor evidence="1">
        <name>Zn(2+)</name>
        <dbReference type="ChEBI" id="CHEBI:29105"/>
    </cofactor>
    <text evidence="1">Binds 1 zinc ion per subunit.</text>
</comment>
<comment type="subcellular location">
    <subcellularLocation>
        <location evidence="1">Cytoplasm</location>
    </subcellularLocation>
</comment>
<comment type="domain">
    <text evidence="1">Consists of three domains; the N-terminal catalytic domain, the editing domain and the C-terminal C-Ala domain. The editing domain removes incorrectly charged amino acids, while the C-Ala domain, along with tRNA(Ala), serves as a bridge to cooperatively bring together the editing and aminoacylation centers thus stimulating deacylation of misacylated tRNAs.</text>
</comment>
<comment type="similarity">
    <text evidence="1">Belongs to the class-II aminoacyl-tRNA synthetase family.</text>
</comment>
<dbReference type="EC" id="6.1.1.7" evidence="1"/>
<dbReference type="EMBL" id="CP000282">
    <property type="protein sequence ID" value="ABD80561.1"/>
    <property type="molecule type" value="Genomic_DNA"/>
</dbReference>
<dbReference type="RefSeq" id="WP_011467781.1">
    <property type="nucleotide sequence ID" value="NC_007912.1"/>
</dbReference>
<dbReference type="SMR" id="Q21L68"/>
<dbReference type="STRING" id="203122.Sde_1299"/>
<dbReference type="GeneID" id="98612974"/>
<dbReference type="KEGG" id="sde:Sde_1299"/>
<dbReference type="eggNOG" id="COG0013">
    <property type="taxonomic scope" value="Bacteria"/>
</dbReference>
<dbReference type="HOGENOM" id="CLU_004485_1_1_6"/>
<dbReference type="OrthoDB" id="9803884at2"/>
<dbReference type="Proteomes" id="UP000001947">
    <property type="component" value="Chromosome"/>
</dbReference>
<dbReference type="GO" id="GO:0005829">
    <property type="term" value="C:cytosol"/>
    <property type="evidence" value="ECO:0007669"/>
    <property type="project" value="TreeGrafter"/>
</dbReference>
<dbReference type="GO" id="GO:0004813">
    <property type="term" value="F:alanine-tRNA ligase activity"/>
    <property type="evidence" value="ECO:0007669"/>
    <property type="project" value="UniProtKB-UniRule"/>
</dbReference>
<dbReference type="GO" id="GO:0002161">
    <property type="term" value="F:aminoacyl-tRNA deacylase activity"/>
    <property type="evidence" value="ECO:0007669"/>
    <property type="project" value="TreeGrafter"/>
</dbReference>
<dbReference type="GO" id="GO:0005524">
    <property type="term" value="F:ATP binding"/>
    <property type="evidence" value="ECO:0007669"/>
    <property type="project" value="UniProtKB-UniRule"/>
</dbReference>
<dbReference type="GO" id="GO:0000049">
    <property type="term" value="F:tRNA binding"/>
    <property type="evidence" value="ECO:0007669"/>
    <property type="project" value="UniProtKB-KW"/>
</dbReference>
<dbReference type="GO" id="GO:0008270">
    <property type="term" value="F:zinc ion binding"/>
    <property type="evidence" value="ECO:0007669"/>
    <property type="project" value="UniProtKB-UniRule"/>
</dbReference>
<dbReference type="GO" id="GO:0006419">
    <property type="term" value="P:alanyl-tRNA aminoacylation"/>
    <property type="evidence" value="ECO:0007669"/>
    <property type="project" value="UniProtKB-UniRule"/>
</dbReference>
<dbReference type="GO" id="GO:0045892">
    <property type="term" value="P:negative regulation of DNA-templated transcription"/>
    <property type="evidence" value="ECO:0007669"/>
    <property type="project" value="TreeGrafter"/>
</dbReference>
<dbReference type="CDD" id="cd00673">
    <property type="entry name" value="AlaRS_core"/>
    <property type="match status" value="1"/>
</dbReference>
<dbReference type="FunFam" id="2.40.30.130:FF:000001">
    <property type="entry name" value="Alanine--tRNA ligase"/>
    <property type="match status" value="1"/>
</dbReference>
<dbReference type="FunFam" id="3.10.310.40:FF:000001">
    <property type="entry name" value="Alanine--tRNA ligase"/>
    <property type="match status" value="1"/>
</dbReference>
<dbReference type="FunFam" id="3.30.54.20:FF:000001">
    <property type="entry name" value="Alanine--tRNA ligase"/>
    <property type="match status" value="1"/>
</dbReference>
<dbReference type="FunFam" id="3.30.930.10:FF:000004">
    <property type="entry name" value="Alanine--tRNA ligase"/>
    <property type="match status" value="1"/>
</dbReference>
<dbReference type="FunFam" id="3.30.980.10:FF:000004">
    <property type="entry name" value="Alanine--tRNA ligase, cytoplasmic"/>
    <property type="match status" value="1"/>
</dbReference>
<dbReference type="Gene3D" id="2.40.30.130">
    <property type="match status" value="1"/>
</dbReference>
<dbReference type="Gene3D" id="3.10.310.40">
    <property type="match status" value="1"/>
</dbReference>
<dbReference type="Gene3D" id="3.30.54.20">
    <property type="match status" value="1"/>
</dbReference>
<dbReference type="Gene3D" id="6.10.250.550">
    <property type="match status" value="1"/>
</dbReference>
<dbReference type="Gene3D" id="3.30.930.10">
    <property type="entry name" value="Bira Bifunctional Protein, Domain 2"/>
    <property type="match status" value="1"/>
</dbReference>
<dbReference type="Gene3D" id="3.30.980.10">
    <property type="entry name" value="Threonyl-trna Synthetase, Chain A, domain 2"/>
    <property type="match status" value="1"/>
</dbReference>
<dbReference type="HAMAP" id="MF_00036_B">
    <property type="entry name" value="Ala_tRNA_synth_B"/>
    <property type="match status" value="1"/>
</dbReference>
<dbReference type="InterPro" id="IPR045864">
    <property type="entry name" value="aa-tRNA-synth_II/BPL/LPL"/>
</dbReference>
<dbReference type="InterPro" id="IPR002318">
    <property type="entry name" value="Ala-tRNA-lgiase_IIc"/>
</dbReference>
<dbReference type="InterPro" id="IPR018162">
    <property type="entry name" value="Ala-tRNA-ligase_IIc_anticod-bd"/>
</dbReference>
<dbReference type="InterPro" id="IPR018165">
    <property type="entry name" value="Ala-tRNA-synth_IIc_core"/>
</dbReference>
<dbReference type="InterPro" id="IPR018164">
    <property type="entry name" value="Ala-tRNA-synth_IIc_N"/>
</dbReference>
<dbReference type="InterPro" id="IPR050058">
    <property type="entry name" value="Ala-tRNA_ligase"/>
</dbReference>
<dbReference type="InterPro" id="IPR023033">
    <property type="entry name" value="Ala_tRNA_ligase_euk/bac"/>
</dbReference>
<dbReference type="InterPro" id="IPR003156">
    <property type="entry name" value="DHHA1_dom"/>
</dbReference>
<dbReference type="InterPro" id="IPR018163">
    <property type="entry name" value="Thr/Ala-tRNA-synth_IIc_edit"/>
</dbReference>
<dbReference type="InterPro" id="IPR009000">
    <property type="entry name" value="Transl_B-barrel_sf"/>
</dbReference>
<dbReference type="InterPro" id="IPR012947">
    <property type="entry name" value="tRNA_SAD"/>
</dbReference>
<dbReference type="NCBIfam" id="TIGR00344">
    <property type="entry name" value="alaS"/>
    <property type="match status" value="1"/>
</dbReference>
<dbReference type="PANTHER" id="PTHR11777:SF9">
    <property type="entry name" value="ALANINE--TRNA LIGASE, CYTOPLASMIC"/>
    <property type="match status" value="1"/>
</dbReference>
<dbReference type="PANTHER" id="PTHR11777">
    <property type="entry name" value="ALANYL-TRNA SYNTHETASE"/>
    <property type="match status" value="1"/>
</dbReference>
<dbReference type="Pfam" id="PF02272">
    <property type="entry name" value="DHHA1"/>
    <property type="match status" value="1"/>
</dbReference>
<dbReference type="Pfam" id="PF01411">
    <property type="entry name" value="tRNA-synt_2c"/>
    <property type="match status" value="1"/>
</dbReference>
<dbReference type="Pfam" id="PF07973">
    <property type="entry name" value="tRNA_SAD"/>
    <property type="match status" value="1"/>
</dbReference>
<dbReference type="PRINTS" id="PR00980">
    <property type="entry name" value="TRNASYNTHALA"/>
</dbReference>
<dbReference type="SMART" id="SM00863">
    <property type="entry name" value="tRNA_SAD"/>
    <property type="match status" value="1"/>
</dbReference>
<dbReference type="SUPFAM" id="SSF55681">
    <property type="entry name" value="Class II aaRS and biotin synthetases"/>
    <property type="match status" value="1"/>
</dbReference>
<dbReference type="SUPFAM" id="SSF101353">
    <property type="entry name" value="Putative anticodon-binding domain of alanyl-tRNA synthetase (AlaRS)"/>
    <property type="match status" value="1"/>
</dbReference>
<dbReference type="SUPFAM" id="SSF55186">
    <property type="entry name" value="ThrRS/AlaRS common domain"/>
    <property type="match status" value="1"/>
</dbReference>
<dbReference type="SUPFAM" id="SSF50447">
    <property type="entry name" value="Translation proteins"/>
    <property type="match status" value="1"/>
</dbReference>
<dbReference type="PROSITE" id="PS50860">
    <property type="entry name" value="AA_TRNA_LIGASE_II_ALA"/>
    <property type="match status" value="1"/>
</dbReference>
<accession>Q21L68</accession>